<keyword id="KW-0687">Ribonucleoprotein</keyword>
<keyword id="KW-0689">Ribosomal protein</keyword>
<keyword id="KW-0694">RNA-binding</keyword>
<keyword id="KW-0699">rRNA-binding</keyword>
<protein>
    <recommendedName>
        <fullName evidence="1">Large ribosomal subunit protein bL25</fullName>
    </recommendedName>
    <alternativeName>
        <fullName evidence="2">50S ribosomal protein L25</fullName>
    </alternativeName>
    <alternativeName>
        <fullName evidence="1">General stress protein CTC</fullName>
    </alternativeName>
</protein>
<dbReference type="EMBL" id="CP000849">
    <property type="protein sequence ID" value="ABV78892.1"/>
    <property type="molecule type" value="Genomic_DNA"/>
</dbReference>
<dbReference type="RefSeq" id="WP_011477528.1">
    <property type="nucleotide sequence ID" value="NC_009883.1"/>
</dbReference>
<dbReference type="SMR" id="A8GVL5"/>
<dbReference type="KEGG" id="rbo:A1I_02590"/>
<dbReference type="HOGENOM" id="CLU_075939_0_0_5"/>
<dbReference type="GO" id="GO:0022625">
    <property type="term" value="C:cytosolic large ribosomal subunit"/>
    <property type="evidence" value="ECO:0007669"/>
    <property type="project" value="TreeGrafter"/>
</dbReference>
<dbReference type="GO" id="GO:0008097">
    <property type="term" value="F:5S rRNA binding"/>
    <property type="evidence" value="ECO:0007669"/>
    <property type="project" value="InterPro"/>
</dbReference>
<dbReference type="GO" id="GO:0003735">
    <property type="term" value="F:structural constituent of ribosome"/>
    <property type="evidence" value="ECO:0007669"/>
    <property type="project" value="InterPro"/>
</dbReference>
<dbReference type="GO" id="GO:0006412">
    <property type="term" value="P:translation"/>
    <property type="evidence" value="ECO:0007669"/>
    <property type="project" value="UniProtKB-UniRule"/>
</dbReference>
<dbReference type="CDD" id="cd00495">
    <property type="entry name" value="Ribosomal_L25_TL5_CTC"/>
    <property type="match status" value="1"/>
</dbReference>
<dbReference type="Gene3D" id="2.170.120.20">
    <property type="entry name" value="Ribosomal protein L25, beta domain"/>
    <property type="match status" value="1"/>
</dbReference>
<dbReference type="Gene3D" id="2.40.240.10">
    <property type="entry name" value="Ribosomal Protein L25, Chain P"/>
    <property type="match status" value="1"/>
</dbReference>
<dbReference type="HAMAP" id="MF_01336">
    <property type="entry name" value="Ribosomal_bL25"/>
    <property type="match status" value="1"/>
</dbReference>
<dbReference type="HAMAP" id="MF_01334">
    <property type="entry name" value="Ribosomal_bL25_CTC"/>
    <property type="match status" value="1"/>
</dbReference>
<dbReference type="InterPro" id="IPR020056">
    <property type="entry name" value="Rbsml_bL25/Gln-tRNA_synth_N"/>
</dbReference>
<dbReference type="InterPro" id="IPR011035">
    <property type="entry name" value="Ribosomal_bL25/Gln-tRNA_synth"/>
</dbReference>
<dbReference type="InterPro" id="IPR020057">
    <property type="entry name" value="Ribosomal_bL25_b-dom"/>
</dbReference>
<dbReference type="InterPro" id="IPR037121">
    <property type="entry name" value="Ribosomal_bL25_C"/>
</dbReference>
<dbReference type="InterPro" id="IPR001021">
    <property type="entry name" value="Ribosomal_bL25_long"/>
</dbReference>
<dbReference type="InterPro" id="IPR020055">
    <property type="entry name" value="Ribosomal_bL25_short"/>
</dbReference>
<dbReference type="InterPro" id="IPR029751">
    <property type="entry name" value="Ribosomal_L25_dom"/>
</dbReference>
<dbReference type="InterPro" id="IPR020930">
    <property type="entry name" value="Ribosomal_uL5_bac-type"/>
</dbReference>
<dbReference type="NCBIfam" id="TIGR00731">
    <property type="entry name" value="bL25_bact_ctc"/>
    <property type="match status" value="1"/>
</dbReference>
<dbReference type="NCBIfam" id="NF004128">
    <property type="entry name" value="PRK05618.1-2"/>
    <property type="match status" value="1"/>
</dbReference>
<dbReference type="NCBIfam" id="NF004612">
    <property type="entry name" value="PRK05943.1"/>
    <property type="match status" value="1"/>
</dbReference>
<dbReference type="PANTHER" id="PTHR33284">
    <property type="entry name" value="RIBOSOMAL PROTEIN L25/GLN-TRNA SYNTHETASE, ANTI-CODON-BINDING DOMAIN-CONTAINING PROTEIN"/>
    <property type="match status" value="1"/>
</dbReference>
<dbReference type="PANTHER" id="PTHR33284:SF1">
    <property type="entry name" value="RIBOSOMAL PROTEIN L25_GLN-TRNA SYNTHETASE, ANTI-CODON-BINDING DOMAIN-CONTAINING PROTEIN"/>
    <property type="match status" value="1"/>
</dbReference>
<dbReference type="Pfam" id="PF01386">
    <property type="entry name" value="Ribosomal_L25p"/>
    <property type="match status" value="1"/>
</dbReference>
<dbReference type="Pfam" id="PF14693">
    <property type="entry name" value="Ribosomal_TL5_C"/>
    <property type="match status" value="1"/>
</dbReference>
<dbReference type="SUPFAM" id="SSF50715">
    <property type="entry name" value="Ribosomal protein L25-like"/>
    <property type="match status" value="1"/>
</dbReference>
<comment type="function">
    <text evidence="1">This is one of the proteins that binds to the 5S RNA in the ribosome where it forms part of the central protuberance.</text>
</comment>
<comment type="subunit">
    <text evidence="1">Part of the 50S ribosomal subunit; part of the 5S rRNA/L5/L18/L25 subcomplex. Contacts the 5S rRNA. Binds to the 5S rRNA independently of L5 and L18.</text>
</comment>
<comment type="similarity">
    <text evidence="1">Belongs to the bacterial ribosomal protein bL25 family. CTC subfamily.</text>
</comment>
<feature type="chain" id="PRO_1000052931" description="Large ribosomal subunit protein bL25">
    <location>
        <begin position="1"/>
        <end position="202"/>
    </location>
</feature>
<proteinExistence type="inferred from homology"/>
<evidence type="ECO:0000255" key="1">
    <source>
        <dbReference type="HAMAP-Rule" id="MF_01334"/>
    </source>
</evidence>
<evidence type="ECO:0000305" key="2"/>
<reference key="1">
    <citation type="submission" date="2007-09" db="EMBL/GenBank/DDBJ databases">
        <title>Complete genome sequencing of Rickettsia bellii.</title>
        <authorList>
            <person name="Madan A."/>
            <person name="Lee H."/>
            <person name="Madan A."/>
            <person name="Yoon J.-G."/>
            <person name="Ryu G.-Y."/>
            <person name="Dasch G."/>
            <person name="Ereemeva M."/>
        </authorList>
    </citation>
    <scope>NUCLEOTIDE SEQUENCE [LARGE SCALE GENOMIC DNA]</scope>
    <source>
        <strain>OSU 85-389</strain>
    </source>
</reference>
<name>RL25_RICB8</name>
<accession>A8GVL5</accession>
<organism>
    <name type="scientific">Rickettsia bellii (strain OSU 85-389)</name>
    <dbReference type="NCBI Taxonomy" id="391896"/>
    <lineage>
        <taxon>Bacteria</taxon>
        <taxon>Pseudomonadati</taxon>
        <taxon>Pseudomonadota</taxon>
        <taxon>Alphaproteobacteria</taxon>
        <taxon>Rickettsiales</taxon>
        <taxon>Rickettsiaceae</taxon>
        <taxon>Rickettsieae</taxon>
        <taxon>Rickettsia</taxon>
        <taxon>belli group</taxon>
    </lineage>
</organism>
<gene>
    <name evidence="1" type="primary">rplY</name>
    <name evidence="1" type="synonym">ctc</name>
    <name type="ordered locus">A1I_02590</name>
</gene>
<sequence>MSEILELEAKSRNEFGTGAARALRREGRVPAIIYGAKKTPVSISLEEKEITKYYRKPAFISQLINLTIEGTQYKVLPKAVELHPVTDIVRHVDFVFLEDKTQKMEVPVVYEGKERALGVKRGGYFNIVKRRVTLLCDVNNIPRNVTIDVTNMPIATSLKSSKVKLPEGCSFTTKKEFVLATIIGRRGAKTEAEGEQTAEAAK</sequence>